<reference key="1">
    <citation type="journal article" date="2000" name="Nature">
        <title>Complete genome sequence of Pseudomonas aeruginosa PAO1, an opportunistic pathogen.</title>
        <authorList>
            <person name="Stover C.K."/>
            <person name="Pham X.-Q.T."/>
            <person name="Erwin A.L."/>
            <person name="Mizoguchi S.D."/>
            <person name="Warrener P."/>
            <person name="Hickey M.J."/>
            <person name="Brinkman F.S.L."/>
            <person name="Hufnagle W.O."/>
            <person name="Kowalik D.J."/>
            <person name="Lagrou M."/>
            <person name="Garber R.L."/>
            <person name="Goltry L."/>
            <person name="Tolentino E."/>
            <person name="Westbrock-Wadman S."/>
            <person name="Yuan Y."/>
            <person name="Brody L.L."/>
            <person name="Coulter S.N."/>
            <person name="Folger K.R."/>
            <person name="Kas A."/>
            <person name="Larbig K."/>
            <person name="Lim R.M."/>
            <person name="Smith K.A."/>
            <person name="Spencer D.H."/>
            <person name="Wong G.K.-S."/>
            <person name="Wu Z."/>
            <person name="Paulsen I.T."/>
            <person name="Reizer J."/>
            <person name="Saier M.H. Jr."/>
            <person name="Hancock R.E.W."/>
            <person name="Lory S."/>
            <person name="Olson M.V."/>
        </authorList>
    </citation>
    <scope>NUCLEOTIDE SEQUENCE [LARGE SCALE GENOMIC DNA]</scope>
    <source>
        <strain>ATCC 15692 / DSM 22644 / CIP 104116 / JCM 14847 / LMG 12228 / 1C / PRS 101 / PAO1</strain>
    </source>
</reference>
<gene>
    <name evidence="1" type="primary">tal</name>
    <name type="ordered locus">PA2796</name>
</gene>
<name>TAL_PSEAE</name>
<dbReference type="EC" id="2.2.1.2" evidence="1"/>
<dbReference type="EMBL" id="AE004091">
    <property type="protein sequence ID" value="AAG06184.1"/>
    <property type="molecule type" value="Genomic_DNA"/>
</dbReference>
<dbReference type="PIR" id="D83295">
    <property type="entry name" value="D83295"/>
</dbReference>
<dbReference type="RefSeq" id="NP_251486.1">
    <property type="nucleotide sequence ID" value="NC_002516.2"/>
</dbReference>
<dbReference type="RefSeq" id="WP_003090868.1">
    <property type="nucleotide sequence ID" value="NZ_QZGE01000011.1"/>
</dbReference>
<dbReference type="SMR" id="Q9I047"/>
<dbReference type="FunCoup" id="Q9I047">
    <property type="interactions" value="716"/>
</dbReference>
<dbReference type="STRING" id="208964.PA2796"/>
<dbReference type="PaxDb" id="208964-PA2796"/>
<dbReference type="DNASU" id="882755"/>
<dbReference type="GeneID" id="882755"/>
<dbReference type="KEGG" id="pae:PA2796"/>
<dbReference type="PATRIC" id="fig|208964.12.peg.2934"/>
<dbReference type="PseudoCAP" id="PA2796"/>
<dbReference type="HOGENOM" id="CLU_047470_0_1_6"/>
<dbReference type="InParanoid" id="Q9I047"/>
<dbReference type="OrthoDB" id="9809101at2"/>
<dbReference type="PhylomeDB" id="Q9I047"/>
<dbReference type="BioCyc" id="PAER208964:G1FZ6-2843-MONOMER"/>
<dbReference type="UniPathway" id="UPA00115">
    <property type="reaction ID" value="UER00414"/>
</dbReference>
<dbReference type="Proteomes" id="UP000002438">
    <property type="component" value="Chromosome"/>
</dbReference>
<dbReference type="GO" id="GO:0005829">
    <property type="term" value="C:cytosol"/>
    <property type="evidence" value="ECO:0000318"/>
    <property type="project" value="GO_Central"/>
</dbReference>
<dbReference type="GO" id="GO:0004801">
    <property type="term" value="F:transaldolase activity"/>
    <property type="evidence" value="ECO:0000250"/>
    <property type="project" value="UniProtKB"/>
</dbReference>
<dbReference type="GO" id="GO:0005975">
    <property type="term" value="P:carbohydrate metabolic process"/>
    <property type="evidence" value="ECO:0007669"/>
    <property type="project" value="InterPro"/>
</dbReference>
<dbReference type="GO" id="GO:0009052">
    <property type="term" value="P:pentose-phosphate shunt, non-oxidative branch"/>
    <property type="evidence" value="ECO:0000318"/>
    <property type="project" value="GO_Central"/>
</dbReference>
<dbReference type="CDD" id="cd00957">
    <property type="entry name" value="Transaldolase_TalAB"/>
    <property type="match status" value="1"/>
</dbReference>
<dbReference type="FunFam" id="3.20.20.70:FF:000002">
    <property type="entry name" value="Transaldolase"/>
    <property type="match status" value="1"/>
</dbReference>
<dbReference type="Gene3D" id="3.20.20.70">
    <property type="entry name" value="Aldolase class I"/>
    <property type="match status" value="1"/>
</dbReference>
<dbReference type="HAMAP" id="MF_00492">
    <property type="entry name" value="Transaldolase_1"/>
    <property type="match status" value="1"/>
</dbReference>
<dbReference type="InterPro" id="IPR013785">
    <property type="entry name" value="Aldolase_TIM"/>
</dbReference>
<dbReference type="InterPro" id="IPR001585">
    <property type="entry name" value="TAL/FSA"/>
</dbReference>
<dbReference type="InterPro" id="IPR004730">
    <property type="entry name" value="Transaldolase_1"/>
</dbReference>
<dbReference type="InterPro" id="IPR018225">
    <property type="entry name" value="Transaldolase_AS"/>
</dbReference>
<dbReference type="NCBIfam" id="NF009001">
    <property type="entry name" value="PRK12346.1"/>
    <property type="match status" value="1"/>
</dbReference>
<dbReference type="NCBIfam" id="TIGR00874">
    <property type="entry name" value="talAB"/>
    <property type="match status" value="1"/>
</dbReference>
<dbReference type="PANTHER" id="PTHR10683">
    <property type="entry name" value="TRANSALDOLASE"/>
    <property type="match status" value="1"/>
</dbReference>
<dbReference type="PANTHER" id="PTHR10683:SF18">
    <property type="entry name" value="TRANSALDOLASE"/>
    <property type="match status" value="1"/>
</dbReference>
<dbReference type="Pfam" id="PF00923">
    <property type="entry name" value="TAL_FSA"/>
    <property type="match status" value="1"/>
</dbReference>
<dbReference type="SUPFAM" id="SSF51569">
    <property type="entry name" value="Aldolase"/>
    <property type="match status" value="1"/>
</dbReference>
<dbReference type="PROSITE" id="PS01054">
    <property type="entry name" value="TRANSALDOLASE_1"/>
    <property type="match status" value="1"/>
</dbReference>
<dbReference type="PROSITE" id="PS00958">
    <property type="entry name" value="TRANSALDOLASE_2"/>
    <property type="match status" value="1"/>
</dbReference>
<organism>
    <name type="scientific">Pseudomonas aeruginosa (strain ATCC 15692 / DSM 22644 / CIP 104116 / JCM 14847 / LMG 12228 / 1C / PRS 101 / PAO1)</name>
    <dbReference type="NCBI Taxonomy" id="208964"/>
    <lineage>
        <taxon>Bacteria</taxon>
        <taxon>Pseudomonadati</taxon>
        <taxon>Pseudomonadota</taxon>
        <taxon>Gammaproteobacteria</taxon>
        <taxon>Pseudomonadales</taxon>
        <taxon>Pseudomonadaceae</taxon>
        <taxon>Pseudomonas</taxon>
    </lineage>
</organism>
<feature type="chain" id="PRO_0000173607" description="Transaldolase">
    <location>
        <begin position="1"/>
        <end position="307"/>
    </location>
</feature>
<feature type="active site" description="Schiff-base intermediate with substrate" evidence="1">
    <location>
        <position position="125"/>
    </location>
</feature>
<sequence>MTSKLEQLKQYTTVVADTGDFDAIARLKPVDATTNPSLLLKAAALPRYAEHLRQATAGSGGDAGLACDRFAVAVGKDILGVIPGRISTEVDARLSFDSEATLARAHRLIELYDEQGIDRERVLIKIASTWEGIRAAEILEREGIQTNLTLLFSFAQAVACADAGVFLISPFVGRIYDWYKKSENRDYAGAEDPGVQSVSRIYRYYKANGYKTVVMGASFRNLGQIEQLAGCDRLTISPDLLQQLADAQGELPRLLLPGEGEPRQVLDESAFRWQMNEDAMATEKLAEGIRLFARDQEKLEYQLATRH</sequence>
<keyword id="KW-0963">Cytoplasm</keyword>
<keyword id="KW-0570">Pentose shunt</keyword>
<keyword id="KW-1185">Reference proteome</keyword>
<keyword id="KW-0704">Schiff base</keyword>
<keyword id="KW-0808">Transferase</keyword>
<accession>Q9I047</accession>
<comment type="function">
    <text evidence="1">Transaldolase is important for the balance of metabolites in the pentose-phosphate pathway.</text>
</comment>
<comment type="catalytic activity">
    <reaction evidence="1">
        <text>D-sedoheptulose 7-phosphate + D-glyceraldehyde 3-phosphate = D-erythrose 4-phosphate + beta-D-fructose 6-phosphate</text>
        <dbReference type="Rhea" id="RHEA:17053"/>
        <dbReference type="ChEBI" id="CHEBI:16897"/>
        <dbReference type="ChEBI" id="CHEBI:57483"/>
        <dbReference type="ChEBI" id="CHEBI:57634"/>
        <dbReference type="ChEBI" id="CHEBI:59776"/>
        <dbReference type="EC" id="2.2.1.2"/>
    </reaction>
</comment>
<comment type="pathway">
    <text evidence="1">Carbohydrate degradation; pentose phosphate pathway; D-glyceraldehyde 3-phosphate and beta-D-fructose 6-phosphate from D-ribose 5-phosphate and D-xylulose 5-phosphate (non-oxidative stage): step 2/3.</text>
</comment>
<comment type="subcellular location">
    <subcellularLocation>
        <location evidence="1">Cytoplasm</location>
    </subcellularLocation>
</comment>
<comment type="similarity">
    <text evidence="1 2">Belongs to the transaldolase family. Type 1 subfamily.</text>
</comment>
<proteinExistence type="inferred from homology"/>
<protein>
    <recommendedName>
        <fullName evidence="1">Transaldolase</fullName>
        <ecNumber evidence="1">2.2.1.2</ecNumber>
    </recommendedName>
</protein>
<evidence type="ECO:0000255" key="1">
    <source>
        <dbReference type="HAMAP-Rule" id="MF_00492"/>
    </source>
</evidence>
<evidence type="ECO:0000305" key="2"/>